<accession>A6WY25</accession>
<sequence length="85" mass="9510">MDEIESSAVNAAASELRSIIERVERLEEEKAAIANDVKDVLGEAKGRGYDTKAIKTIIRLRKKDANERLEEETILQTYMAALGME</sequence>
<name>Y1161_BRUA4</name>
<protein>
    <recommendedName>
        <fullName evidence="1">UPF0335 protein Oant_1161</fullName>
    </recommendedName>
</protein>
<gene>
    <name type="ordered locus">Oant_1161</name>
</gene>
<organism>
    <name type="scientific">Brucella anthropi (strain ATCC 49188 / DSM 6882 / CCUG 24695 / JCM 21032 / LMG 3331 / NBRC 15819 / NCTC 12168 / Alc 37)</name>
    <name type="common">Ochrobactrum anthropi</name>
    <dbReference type="NCBI Taxonomy" id="439375"/>
    <lineage>
        <taxon>Bacteria</taxon>
        <taxon>Pseudomonadati</taxon>
        <taxon>Pseudomonadota</taxon>
        <taxon>Alphaproteobacteria</taxon>
        <taxon>Hyphomicrobiales</taxon>
        <taxon>Brucellaceae</taxon>
        <taxon>Brucella/Ochrobactrum group</taxon>
        <taxon>Brucella</taxon>
    </lineage>
</organism>
<keyword id="KW-1185">Reference proteome</keyword>
<reference key="1">
    <citation type="journal article" date="2011" name="J. Bacteriol.">
        <title>Genome of Ochrobactrum anthropi ATCC 49188 T, a versatile opportunistic pathogen and symbiont of several eukaryotic hosts.</title>
        <authorList>
            <person name="Chain P.S."/>
            <person name="Lang D.M."/>
            <person name="Comerci D.J."/>
            <person name="Malfatti S.A."/>
            <person name="Vergez L.M."/>
            <person name="Shin M."/>
            <person name="Ugalde R.A."/>
            <person name="Garcia E."/>
            <person name="Tolmasky M.E."/>
        </authorList>
    </citation>
    <scope>NUCLEOTIDE SEQUENCE [LARGE SCALE GENOMIC DNA]</scope>
    <source>
        <strain>ATCC 49188 / DSM 6882 / CCUG 24695 / JCM 21032 / LMG 3331 / NBRC 15819 / NCTC 12168 / Alc 37</strain>
    </source>
</reference>
<feature type="chain" id="PRO_1000046961" description="UPF0335 protein Oant_1161">
    <location>
        <begin position="1"/>
        <end position="85"/>
    </location>
</feature>
<dbReference type="EMBL" id="CP000758">
    <property type="protein sequence ID" value="ABS13879.1"/>
    <property type="molecule type" value="Genomic_DNA"/>
</dbReference>
<dbReference type="RefSeq" id="WP_012091302.1">
    <property type="nucleotide sequence ID" value="NC_009667.1"/>
</dbReference>
<dbReference type="SMR" id="A6WY25"/>
<dbReference type="STRING" id="439375.Oant_1161"/>
<dbReference type="KEGG" id="oan:Oant_1161"/>
<dbReference type="PATRIC" id="fig|439375.7.peg.1211"/>
<dbReference type="eggNOG" id="COG3750">
    <property type="taxonomic scope" value="Bacteria"/>
</dbReference>
<dbReference type="HOGENOM" id="CLU_158651_2_0_5"/>
<dbReference type="Proteomes" id="UP000002301">
    <property type="component" value="Chromosome 1"/>
</dbReference>
<dbReference type="GO" id="GO:0003677">
    <property type="term" value="F:DNA binding"/>
    <property type="evidence" value="ECO:0007669"/>
    <property type="project" value="InterPro"/>
</dbReference>
<dbReference type="HAMAP" id="MF_00797">
    <property type="entry name" value="UPF0335"/>
    <property type="match status" value="1"/>
</dbReference>
<dbReference type="InterPro" id="IPR018753">
    <property type="entry name" value="GapR-like"/>
</dbReference>
<dbReference type="InterPro" id="IPR046367">
    <property type="entry name" value="GapR-like_DNA-bd"/>
</dbReference>
<dbReference type="NCBIfam" id="NF010247">
    <property type="entry name" value="PRK13694.1"/>
    <property type="match status" value="1"/>
</dbReference>
<dbReference type="Pfam" id="PF10073">
    <property type="entry name" value="GapR_DNA-bd"/>
    <property type="match status" value="1"/>
</dbReference>
<evidence type="ECO:0000255" key="1">
    <source>
        <dbReference type="HAMAP-Rule" id="MF_00797"/>
    </source>
</evidence>
<proteinExistence type="inferred from homology"/>
<comment type="similarity">
    <text evidence="1">Belongs to the UPF0335 family.</text>
</comment>